<protein>
    <recommendedName>
        <fullName evidence="1">Formate-dependent phosphoribosylglycinamide formyltransferase</fullName>
        <ecNumber evidence="1">6.3.1.21</ecNumber>
    </recommendedName>
    <alternativeName>
        <fullName evidence="1">5'-phosphoribosylglycinamide transformylase 2</fullName>
    </alternativeName>
    <alternativeName>
        <fullName evidence="1">Formate-dependent GAR transformylase</fullName>
    </alternativeName>
    <alternativeName>
        <fullName evidence="1">GAR transformylase 2</fullName>
        <shortName evidence="1">GART 2</shortName>
    </alternativeName>
    <alternativeName>
        <fullName evidence="1">Non-folate glycinamide ribonucleotide transformylase</fullName>
    </alternativeName>
    <alternativeName>
        <fullName evidence="1">Phosphoribosylglycinamide formyltransferase 2</fullName>
    </alternativeName>
</protein>
<name>PURT_MYCVP</name>
<gene>
    <name evidence="1" type="primary">purT</name>
    <name type="ordered locus">Mvan_4678</name>
</gene>
<comment type="function">
    <text evidence="1">Involved in the de novo purine biosynthesis. Catalyzes the transfer of formate to 5-phospho-ribosyl-glycinamide (GAR), producing 5-phospho-ribosyl-N-formylglycinamide (FGAR). Formate is provided by PurU via hydrolysis of 10-formyl-tetrahydrofolate.</text>
</comment>
<comment type="catalytic activity">
    <reaction evidence="1">
        <text>N(1)-(5-phospho-beta-D-ribosyl)glycinamide + formate + ATP = N(2)-formyl-N(1)-(5-phospho-beta-D-ribosyl)glycinamide + ADP + phosphate + H(+)</text>
        <dbReference type="Rhea" id="RHEA:24829"/>
        <dbReference type="ChEBI" id="CHEBI:15378"/>
        <dbReference type="ChEBI" id="CHEBI:15740"/>
        <dbReference type="ChEBI" id="CHEBI:30616"/>
        <dbReference type="ChEBI" id="CHEBI:43474"/>
        <dbReference type="ChEBI" id="CHEBI:143788"/>
        <dbReference type="ChEBI" id="CHEBI:147286"/>
        <dbReference type="ChEBI" id="CHEBI:456216"/>
        <dbReference type="EC" id="6.3.1.21"/>
    </reaction>
    <physiologicalReaction direction="left-to-right" evidence="1">
        <dbReference type="Rhea" id="RHEA:24830"/>
    </physiologicalReaction>
</comment>
<comment type="pathway">
    <text evidence="1">Purine metabolism; IMP biosynthesis via de novo pathway; N(2)-formyl-N(1)-(5-phospho-D-ribosyl)glycinamide from N(1)-(5-phospho-D-ribosyl)glycinamide (formate route): step 1/1.</text>
</comment>
<comment type="subunit">
    <text evidence="1">Homodimer.</text>
</comment>
<comment type="similarity">
    <text evidence="1">Belongs to the PurK/PurT family.</text>
</comment>
<dbReference type="EC" id="6.3.1.21" evidence="1"/>
<dbReference type="EMBL" id="CP000511">
    <property type="protein sequence ID" value="ABM15453.1"/>
    <property type="molecule type" value="Genomic_DNA"/>
</dbReference>
<dbReference type="RefSeq" id="WP_011781828.1">
    <property type="nucleotide sequence ID" value="NZ_JACKSD010000381.1"/>
</dbReference>
<dbReference type="SMR" id="A1TE53"/>
<dbReference type="STRING" id="350058.Mvan_4678"/>
<dbReference type="KEGG" id="mva:Mvan_4678"/>
<dbReference type="eggNOG" id="COG0027">
    <property type="taxonomic scope" value="Bacteria"/>
</dbReference>
<dbReference type="HOGENOM" id="CLU_011534_1_3_11"/>
<dbReference type="UniPathway" id="UPA00074">
    <property type="reaction ID" value="UER00127"/>
</dbReference>
<dbReference type="Proteomes" id="UP000009159">
    <property type="component" value="Chromosome"/>
</dbReference>
<dbReference type="GO" id="GO:0005829">
    <property type="term" value="C:cytosol"/>
    <property type="evidence" value="ECO:0007669"/>
    <property type="project" value="TreeGrafter"/>
</dbReference>
<dbReference type="GO" id="GO:0005524">
    <property type="term" value="F:ATP binding"/>
    <property type="evidence" value="ECO:0007669"/>
    <property type="project" value="UniProtKB-UniRule"/>
</dbReference>
<dbReference type="GO" id="GO:0000287">
    <property type="term" value="F:magnesium ion binding"/>
    <property type="evidence" value="ECO:0007669"/>
    <property type="project" value="InterPro"/>
</dbReference>
<dbReference type="GO" id="GO:0043815">
    <property type="term" value="F:phosphoribosylglycinamide formyltransferase 2 activity"/>
    <property type="evidence" value="ECO:0007669"/>
    <property type="project" value="UniProtKB-UniRule"/>
</dbReference>
<dbReference type="GO" id="GO:0004644">
    <property type="term" value="F:phosphoribosylglycinamide formyltransferase activity"/>
    <property type="evidence" value="ECO:0007669"/>
    <property type="project" value="InterPro"/>
</dbReference>
<dbReference type="GO" id="GO:0006189">
    <property type="term" value="P:'de novo' IMP biosynthetic process"/>
    <property type="evidence" value="ECO:0007669"/>
    <property type="project" value="UniProtKB-UniRule"/>
</dbReference>
<dbReference type="Gene3D" id="3.40.50.20">
    <property type="match status" value="1"/>
</dbReference>
<dbReference type="Gene3D" id="3.30.1490.20">
    <property type="entry name" value="ATP-grasp fold, A domain"/>
    <property type="match status" value="1"/>
</dbReference>
<dbReference type="Gene3D" id="3.30.470.20">
    <property type="entry name" value="ATP-grasp fold, B domain"/>
    <property type="match status" value="1"/>
</dbReference>
<dbReference type="HAMAP" id="MF_01643">
    <property type="entry name" value="PurT"/>
    <property type="match status" value="1"/>
</dbReference>
<dbReference type="InterPro" id="IPR011761">
    <property type="entry name" value="ATP-grasp"/>
</dbReference>
<dbReference type="InterPro" id="IPR003135">
    <property type="entry name" value="ATP-grasp_carboxylate-amine"/>
</dbReference>
<dbReference type="InterPro" id="IPR013815">
    <property type="entry name" value="ATP_grasp_subdomain_1"/>
</dbReference>
<dbReference type="InterPro" id="IPR016185">
    <property type="entry name" value="PreATP-grasp_dom_sf"/>
</dbReference>
<dbReference type="InterPro" id="IPR005862">
    <property type="entry name" value="PurT"/>
</dbReference>
<dbReference type="InterPro" id="IPR054350">
    <property type="entry name" value="PurT/PurK_preATP-grasp"/>
</dbReference>
<dbReference type="InterPro" id="IPR048740">
    <property type="entry name" value="PurT_C"/>
</dbReference>
<dbReference type="InterPro" id="IPR011054">
    <property type="entry name" value="Rudment_hybrid_motif"/>
</dbReference>
<dbReference type="NCBIfam" id="NF006766">
    <property type="entry name" value="PRK09288.1"/>
    <property type="match status" value="1"/>
</dbReference>
<dbReference type="NCBIfam" id="TIGR01142">
    <property type="entry name" value="purT"/>
    <property type="match status" value="1"/>
</dbReference>
<dbReference type="PANTHER" id="PTHR43055">
    <property type="entry name" value="FORMATE-DEPENDENT PHOSPHORIBOSYLGLYCINAMIDE FORMYLTRANSFERASE"/>
    <property type="match status" value="1"/>
</dbReference>
<dbReference type="PANTHER" id="PTHR43055:SF1">
    <property type="entry name" value="FORMATE-DEPENDENT PHOSPHORIBOSYLGLYCINAMIDE FORMYLTRANSFERASE"/>
    <property type="match status" value="1"/>
</dbReference>
<dbReference type="Pfam" id="PF02222">
    <property type="entry name" value="ATP-grasp"/>
    <property type="match status" value="1"/>
</dbReference>
<dbReference type="Pfam" id="PF21244">
    <property type="entry name" value="PurT_C"/>
    <property type="match status" value="1"/>
</dbReference>
<dbReference type="Pfam" id="PF22660">
    <property type="entry name" value="RS_preATP-grasp-like"/>
    <property type="match status" value="1"/>
</dbReference>
<dbReference type="SUPFAM" id="SSF56059">
    <property type="entry name" value="Glutathione synthetase ATP-binding domain-like"/>
    <property type="match status" value="1"/>
</dbReference>
<dbReference type="SUPFAM" id="SSF52440">
    <property type="entry name" value="PreATP-grasp domain"/>
    <property type="match status" value="1"/>
</dbReference>
<dbReference type="SUPFAM" id="SSF51246">
    <property type="entry name" value="Rudiment single hybrid motif"/>
    <property type="match status" value="1"/>
</dbReference>
<dbReference type="PROSITE" id="PS50975">
    <property type="entry name" value="ATP_GRASP"/>
    <property type="match status" value="1"/>
</dbReference>
<feature type="chain" id="PRO_0000319189" description="Formate-dependent phosphoribosylglycinamide formyltransferase">
    <location>
        <begin position="1"/>
        <end position="400"/>
    </location>
</feature>
<feature type="domain" description="ATP-grasp" evidence="1">
    <location>
        <begin position="120"/>
        <end position="315"/>
    </location>
</feature>
<feature type="binding site" evidence="1">
    <location>
        <begin position="22"/>
        <end position="23"/>
    </location>
    <ligand>
        <name>N(1)-(5-phospho-beta-D-ribosyl)glycinamide</name>
        <dbReference type="ChEBI" id="CHEBI:143788"/>
    </ligand>
</feature>
<feature type="binding site" evidence="1">
    <location>
        <position position="82"/>
    </location>
    <ligand>
        <name>N(1)-(5-phospho-beta-D-ribosyl)glycinamide</name>
        <dbReference type="ChEBI" id="CHEBI:143788"/>
    </ligand>
</feature>
<feature type="binding site" evidence="1">
    <location>
        <position position="115"/>
    </location>
    <ligand>
        <name>ATP</name>
        <dbReference type="ChEBI" id="CHEBI:30616"/>
    </ligand>
</feature>
<feature type="binding site" evidence="1">
    <location>
        <position position="157"/>
    </location>
    <ligand>
        <name>ATP</name>
        <dbReference type="ChEBI" id="CHEBI:30616"/>
    </ligand>
</feature>
<feature type="binding site" evidence="1">
    <location>
        <begin position="162"/>
        <end position="167"/>
    </location>
    <ligand>
        <name>ATP</name>
        <dbReference type="ChEBI" id="CHEBI:30616"/>
    </ligand>
</feature>
<feature type="binding site" evidence="1">
    <location>
        <begin position="197"/>
        <end position="200"/>
    </location>
    <ligand>
        <name>ATP</name>
        <dbReference type="ChEBI" id="CHEBI:30616"/>
    </ligand>
</feature>
<feature type="binding site" evidence="1">
    <location>
        <position position="205"/>
    </location>
    <ligand>
        <name>ATP</name>
        <dbReference type="ChEBI" id="CHEBI:30616"/>
    </ligand>
</feature>
<feature type="binding site" evidence="1">
    <location>
        <position position="274"/>
    </location>
    <ligand>
        <name>Mg(2+)</name>
        <dbReference type="ChEBI" id="CHEBI:18420"/>
    </ligand>
</feature>
<feature type="binding site" evidence="1">
    <location>
        <position position="286"/>
    </location>
    <ligand>
        <name>Mg(2+)</name>
        <dbReference type="ChEBI" id="CHEBI:18420"/>
    </ligand>
</feature>
<feature type="binding site" evidence="1">
    <location>
        <position position="293"/>
    </location>
    <ligand>
        <name>N(1)-(5-phospho-beta-D-ribosyl)glycinamide</name>
        <dbReference type="ChEBI" id="CHEBI:143788"/>
    </ligand>
</feature>
<feature type="binding site" evidence="1">
    <location>
        <position position="362"/>
    </location>
    <ligand>
        <name>N(1)-(5-phospho-beta-D-ribosyl)glycinamide</name>
        <dbReference type="ChEBI" id="CHEBI:143788"/>
    </ligand>
</feature>
<feature type="binding site" evidence="1">
    <location>
        <begin position="369"/>
        <end position="370"/>
    </location>
    <ligand>
        <name>N(1)-(5-phospho-beta-D-ribosyl)glycinamide</name>
        <dbReference type="ChEBI" id="CHEBI:143788"/>
    </ligand>
</feature>
<accession>A1TE53</accession>
<sequence>MTTIGTPLSPRATKVMLLGSGELGREVLIALQRLGVETIAVDRYDNAPGQQVAHHARTIAMTDPDQLRALIEAERPDLVVPEIEAIATPALEALEAEGVTTVIPTARAARLTMDREGIRRLAAETLGLPTSPYRFCDSLEELTAAIEGGIGYPCVVKPVMSSSGKGQSKIDGPEGVAAAWEYAMSGSRVSNTRIIVEGFVDFDYEITLLTVRARGADGEIETRFCEPIGHRQVSGDYVESWQPHPMPGTALERARQIAGAVTRDLGGQGIFGVELFVKGDQVWFSEVSPRPHDTGMVTMVTQWQNEFELHARAILGLPVDTTLKSPGASAVIYGGVDAEGVVFDGVDLALRVPHTDIRLFGKPESFVNRRMGVALAFADDVDTARRNAAEAAGRVTPRAV</sequence>
<keyword id="KW-0067">ATP-binding</keyword>
<keyword id="KW-0436">Ligase</keyword>
<keyword id="KW-0460">Magnesium</keyword>
<keyword id="KW-0479">Metal-binding</keyword>
<keyword id="KW-0547">Nucleotide-binding</keyword>
<keyword id="KW-0658">Purine biosynthesis</keyword>
<proteinExistence type="inferred from homology"/>
<evidence type="ECO:0000255" key="1">
    <source>
        <dbReference type="HAMAP-Rule" id="MF_01643"/>
    </source>
</evidence>
<organism>
    <name type="scientific">Mycolicibacterium vanbaalenii (strain DSM 7251 / JCM 13017 / BCRC 16820 / KCTC 9966 / NRRL B-24157 / PYR-1)</name>
    <name type="common">Mycobacterium vanbaalenii</name>
    <dbReference type="NCBI Taxonomy" id="350058"/>
    <lineage>
        <taxon>Bacteria</taxon>
        <taxon>Bacillati</taxon>
        <taxon>Actinomycetota</taxon>
        <taxon>Actinomycetes</taxon>
        <taxon>Mycobacteriales</taxon>
        <taxon>Mycobacteriaceae</taxon>
        <taxon>Mycolicibacterium</taxon>
    </lineage>
</organism>
<reference key="1">
    <citation type="submission" date="2006-12" db="EMBL/GenBank/DDBJ databases">
        <title>Complete sequence of Mycobacterium vanbaalenii PYR-1.</title>
        <authorList>
            <consortium name="US DOE Joint Genome Institute"/>
            <person name="Copeland A."/>
            <person name="Lucas S."/>
            <person name="Lapidus A."/>
            <person name="Barry K."/>
            <person name="Detter J.C."/>
            <person name="Glavina del Rio T."/>
            <person name="Hammon N."/>
            <person name="Israni S."/>
            <person name="Dalin E."/>
            <person name="Tice H."/>
            <person name="Pitluck S."/>
            <person name="Singan V."/>
            <person name="Schmutz J."/>
            <person name="Larimer F."/>
            <person name="Land M."/>
            <person name="Hauser L."/>
            <person name="Kyrpides N."/>
            <person name="Anderson I.J."/>
            <person name="Miller C."/>
            <person name="Richardson P."/>
        </authorList>
    </citation>
    <scope>NUCLEOTIDE SEQUENCE [LARGE SCALE GENOMIC DNA]</scope>
    <source>
        <strain>DSM 7251 / JCM 13017 / BCRC 16820 / KCTC 9966 / NRRL B-24157 / PYR-1</strain>
    </source>
</reference>